<evidence type="ECO:0000250" key="1">
    <source>
        <dbReference type="UniProtKB" id="P03314"/>
    </source>
</evidence>
<evidence type="ECO:0000250" key="2">
    <source>
        <dbReference type="UniProtKB" id="P06935"/>
    </source>
</evidence>
<evidence type="ECO:0000250" key="3">
    <source>
        <dbReference type="UniProtKB" id="P14335"/>
    </source>
</evidence>
<evidence type="ECO:0000250" key="4">
    <source>
        <dbReference type="UniProtKB" id="P14336"/>
    </source>
</evidence>
<evidence type="ECO:0000250" key="5">
    <source>
        <dbReference type="UniProtKB" id="P14340"/>
    </source>
</evidence>
<evidence type="ECO:0000250" key="6">
    <source>
        <dbReference type="UniProtKB" id="P17763"/>
    </source>
</evidence>
<evidence type="ECO:0000250" key="7">
    <source>
        <dbReference type="UniProtKB" id="P27395"/>
    </source>
</evidence>
<evidence type="ECO:0000250" key="8">
    <source>
        <dbReference type="UniProtKB" id="P29990"/>
    </source>
</evidence>
<evidence type="ECO:0000250" key="9">
    <source>
        <dbReference type="UniProtKB" id="Q32ZE1"/>
    </source>
</evidence>
<evidence type="ECO:0000250" key="10">
    <source>
        <dbReference type="UniProtKB" id="Q6YMS4"/>
    </source>
</evidence>
<evidence type="ECO:0000250" key="11">
    <source>
        <dbReference type="UniProtKB" id="Q9Q6P4"/>
    </source>
</evidence>
<evidence type="ECO:0000255" key="12"/>
<evidence type="ECO:0000255" key="13">
    <source>
        <dbReference type="PROSITE-ProRule" id="PRU00539"/>
    </source>
</evidence>
<evidence type="ECO:0000255" key="14">
    <source>
        <dbReference type="PROSITE-ProRule" id="PRU00541"/>
    </source>
</evidence>
<evidence type="ECO:0000255" key="15">
    <source>
        <dbReference type="PROSITE-ProRule" id="PRU00542"/>
    </source>
</evidence>
<evidence type="ECO:0000255" key="16">
    <source>
        <dbReference type="PROSITE-ProRule" id="PRU00859"/>
    </source>
</evidence>
<evidence type="ECO:0000255" key="17">
    <source>
        <dbReference type="PROSITE-ProRule" id="PRU00860"/>
    </source>
</evidence>
<evidence type="ECO:0000255" key="18">
    <source>
        <dbReference type="PROSITE-ProRule" id="PRU00924"/>
    </source>
</evidence>
<evidence type="ECO:0000256" key="19">
    <source>
        <dbReference type="SAM" id="MobiDB-lite"/>
    </source>
</evidence>
<evidence type="ECO:0000305" key="20"/>
<organism>
    <name type="scientific">Japanese encephalitis virus (strain M28)</name>
    <name type="common">JEV</name>
    <dbReference type="NCBI Taxonomy" id="2555554"/>
    <lineage>
        <taxon>Viruses</taxon>
        <taxon>Riboviria</taxon>
        <taxon>Orthornavirae</taxon>
        <taxon>Kitrinoviricota</taxon>
        <taxon>Flasuviricetes</taxon>
        <taxon>Amarillovirales</taxon>
        <taxon>Flaviviridae</taxon>
        <taxon>Orthoflavivirus</taxon>
        <taxon>Orthoflavivirus japonicum</taxon>
    </lineage>
</organism>
<sequence>MTKKPGGPGKNRAINMLKRGLPRVFPLVGVKRVVMSLLDGRGPVRFVLALITFFKFTALAPTKALLGRWRAVEKSVAMKHLTSFKRELGTLIDAVNKRGKKQNKRGGNESSIMWLASLAIVIACAGAMKLSNFQGKLLMTINNTDIADVIVIPTSKGENRCWVRAIDVGYMCEDTITYECPKLAVGNDPEDVDCWCDNQEVYVQYGRCTRTRHSKRSRRSVSVQTHGESSLVNKKEAWLDSTKATRYLMKTENWIIRNPGYAFLAAALGWMLGSNSGQRVVFTILLLLVAPAYSFNCLGMGNRDFIEGASGATWVDLVLEGDSCLTIMANDKPTLDVRMINIEASQLAEVRSYCYHASVTDISTVARCPTTGEAHNEKRADSSYVCKQGFTDRGWGNGCGLFGKGSIDTCAKFSCTSKAIGRTIQPENIKYEVGVFVHGTTTSENHGNYSAQVGASQAAKFTVTPNAPSITLKLGDYGEVTLDCEPRSGLNTEAFYVMTVGSKSFLVHREWFHDLSLPWTSPSSTAWRNRELLMEFEEAHATKQSVVALGSQEGGLHQALAGAIVVEYSSSVKLTSGHLKCRLKMDKLALKGTTYGMCTEKFSFAKNPADTGHGTVVIELTYSGSDGPCKIPIVSVASLNDMTPVGRLVTVNPFVATSSSNSKVLVEMEPPFGDSYIVVGRGDKQINHHWYKAGSTLGKAFSTTLKGAQRLAALGDTAWDFGSIGGVFNSIGKAVHQVFGGAFRTLFGGMSWITQGLMGALLLWMGVNARDRSIALAFLATGGVLVFLATNVHADTGCAIDITRKEMRCGSGIFVHNDVEAWVDRYKYLPETPRSLAKIVHKAHQEGVCGVRSVTRLEHQMWESVRDELNVLLKENAVDLSVVVNKPVGRYRSAPKRLSMTQEKFEMGWKAWGKSILFAPELANSTFVVDGPETKECPDERRAWNSMQIEDFGFGITSTRVWLKIREENTDECDGAIIGTAVKGHVAVHSDLSYWIESRLNDTWKLERAVFGEVKSCTWPETHTLWGDGVEESELIIPHTIAGPRSKHNRREGYKTQNQGPWDENGIVLDFDYCPGTKVTITEDCGKRGPSIRTTTDSGKLITDWCCRSCSLPPLRFRTENGCWYGMEIRPVRHDETTLVRSQVDAFNGEMIDPFQLGLLVMFLATQEVLRKRWTARLTIPAVLGALLVLMLGGITYIDLARYVVLVAAAFAEANSGGDVLHLALIAVFKIQPAFLVMNMLSARWTNQENMVLVLGAAFFQLASVDLQIGVHGILNAAAIAWMIVRAITFPTTSTVAMPVLALLTPGMRALYLDTYRIILLVIGICSLLQERRKTMAKKKGAVLLGLALTSTGWFSPTTIAAGLMVCNPNKKRGWPATEFLSAVGLMFAIVGGLAELDIESMSIPFMLAGLMAVSYVISGKATDMWLDRAADISWEMEAAITGSSRRLDVKLDDDGDFHLIDDPGVPWKVWLLRMSCIGLAALTPWAIVPAAFGYWLTLKTTKRGGVFWDTPSPKPCLKGDTTTGVYRIMARGILGTYQAGVGVMYENVFHTLWHTTRGAAIMSGEGKLTPYWGSVKEDRISYGGPWRFDRKWNGTDDVQVIVVEPGKPAVNIQTKPGVFRTPFGEIGAVSLDYPRGTSGSPILDSNGDIIGLYGNGVELGDGSYVSAIVQGDRQEEPVPDAYTPSMLKKRQMTVLDLHPGSGKTRKILPQIIKDAIQQRLRTAVLAPTRVVAAEMAEALRGLPVRYQTSAVQREHQGNEIVDVMCHATLTHRLMSPNRVPNYNLFVMDEAHFTDPASIAARGYIATKVELGEAAAIFMTATPPGTTDPFPDSNAPIHDLQDEIPDRAWSSGYEWITEYAGKTVWFVASVKMGNEIAMCLQRAGKKVIQLNRKSYDTEYPKCKNGDWDFVITTDISEMGANFGASRVIDCRKSVKPTILEEGEGRVILGNPSPITSASAAQRRGRVGRNPNQVGDEYHYGGATSEDDSNLAHWTEAKIMLDNIHMPNGLVAQLYGPEREKAFTMDGEYRLRGEEKKNFLELLRTADLPVWLAYKVASNGIQYTDRKWCFDGPRTNAILEDNTEVEIVTRMGERKILKPRWLDARVYADHQALKWFKDFAAGKRSAVSFIEVLGRMPEHFMGKTREALDTMYLVATAEKGGKAHRMALEELPDALETITLIVAITVMTGGFFLLMMQRKGIGKMGLGALVLTLATFFLWAAEVPGTKIAGTLLVALLLMVVLIPEPEKQRSQTDNQLAVFLICVLTVVGVVAANEYGMLEKTKADLKSMFGGRTQAPGLTGLPSMALDLRPATAWALYGGSTVVLTPLLKHLITSEYVTTSLASISSQAGSLFVLPRGVPFTDLDLTVGLVFLGCWGQITLTTFLTAMVLVTLHYGYMLPGWQAEALRAAQRRTAAGIMKNAVVDGMVATDVPELERTTPLMQKKVGQVLLIGVSVAAFLVNPNVTTVREAGVLVTAATLTLWDNGASAVWNSTTATGLCHVMRGSYLAGGSIAWTLIKNADKPSLKRGRPGGRTLGEQWKEKLNAMSRDEFFKYRREAIIEVDRTEARRARRENNIVGGHPVSRGSAKLRWLVEKGFVSPIGKVIDLGCGRGGWSYYAATLKKVQEVKGYTKGGAGHEEPMLMQSYGWNLVSLKSGVDVFYKPSEPSDTLFCDIGESSPSPEVEEQRTLRVLEMTSDWLHRGPREFCIKVLCPYMPKVIEKMEVLQRRFGGGLVRLPLSRNSNHEMYWVSGAAGNVVHAVNMTSQVLLGRMDRTVWRGPKYEEDVNLGSGTRAVGKGEVHSNQEKIRKRIQKLREEFATTWHQDPEHPYRTWTYHGSYEVKATGSASSLVNGVVKLMSKPWDAIANVTTMAMTDTTPFGQQRVFKEKVDTKAPEPPAGVKEVLNETTNWLWAHLSREKRPRLCTKEEFIKKVNSNAALGAVFAEQNQWSTAREAVGDPLFWEMVDEERENHLRGECHTCIYNMMGKREKKPGEFGKAKGSRAIWFMWLGARYLEFEALGFLNEDHWLSRENSGGGVEGSGVQKLGYILRDIAGKQGGKMYADDTAGWDTRITRTDLENEAKVLELLDGEHRMLARAIIELTYRHKVVKVMRPAAGGKTVMDVISREDQRGSGQVVTYALNTFTNIAVQLVRLMEAEGVIGPQHLEQLPRKNKIAVRTWLFENGEERVTRMAISGDDCVVKPLDDRFATALHFLNAMSKVRKDIQEWKPSHGWHDWQQVPFCSNHFQEIVMKDGRSIVVPCRGQDELIGRARISPGAGWNVKDTACLAKAYAQMWLLLYFHRRDLRLMANAICSAVPVDWVPTGRTSWSIHSKGEWMTTEDMLQVWNRVWIEENEWMMDKTPITSWTDVPYVGKREDIWCGSLIGTRSRATWAENIYAAINQVRAVIGKENYVDYMSSLRRYEDVLIQEDRVI</sequence>
<reference key="1">
    <citation type="journal article" date="2011" name="J. Virol.">
        <title>Emergence of genotype I of Japanese encephalitis virus as the dominant genotype in Asia.</title>
        <authorList>
            <person name="Pan X.L."/>
            <person name="Liu H."/>
            <person name="Wang H.Y."/>
            <person name="Fu S.H."/>
            <person name="Liu H.Z."/>
            <person name="Zhang H.L."/>
            <person name="Li M.H."/>
            <person name="Gao X.Y."/>
            <person name="Wang J.L."/>
            <person name="Sun X.H."/>
            <person name="Lu X.J."/>
            <person name="Zhai Y.G."/>
            <person name="Meng W.S."/>
            <person name="He Y."/>
            <person name="Wang H.Q."/>
            <person name="Han N."/>
            <person name="Wei B."/>
            <person name="Wu Y.G."/>
            <person name="Feng Y."/>
            <person name="Yang D.J."/>
            <person name="Wang L.H."/>
            <person name="Tang Q."/>
            <person name="Xia G."/>
            <person name="Kurane I."/>
            <person name="Rayner S."/>
            <person name="Liang G.D."/>
        </authorList>
    </citation>
    <scope>NUCLEOTIDE SEQUENCE [LARGE SCALE GENOMIC DNA]</scope>
</reference>
<reference key="2">
    <citation type="journal article" date="2013" name="Zhongguo Ren Shou Gong Huan Bing Za Zhi">
        <title>Genome characterization of the first two genotype I strains of Japanese encephalitis virus in China.</title>
        <authorList>
            <person name="Feng Y."/>
            <person name="Li C."/>
            <person name="Zhang Y.Z."/>
            <person name="Yang W.H."/>
            <person name="Zhang H.L."/>
        </authorList>
    </citation>
    <scope>NUCLEOTIDE SEQUENCE [LARGE SCALE GENOMIC DNA]</scope>
</reference>
<name>POLG_JAEVM</name>
<organismHost>
    <name type="scientific">Ardeidae</name>
    <name type="common">herons</name>
    <dbReference type="NCBI Taxonomy" id="8899"/>
</organismHost>
<organismHost>
    <name type="scientific">Bos taurus</name>
    <name type="common">Bovine</name>
    <dbReference type="NCBI Taxonomy" id="9913"/>
</organismHost>
<organismHost>
    <name type="scientific">Culex gelidus</name>
    <dbReference type="NCBI Taxonomy" id="308713"/>
</organismHost>
<organismHost>
    <name type="scientific">Culex tritaeniorhynchus</name>
    <name type="common">Mosquito</name>
    <dbReference type="NCBI Taxonomy" id="7178"/>
</organismHost>
<organismHost>
    <name type="scientific">Equus caballus</name>
    <name type="common">Horse</name>
    <dbReference type="NCBI Taxonomy" id="9796"/>
</organismHost>
<organismHost>
    <name type="scientific">Homo sapiens</name>
    <name type="common">Human</name>
    <dbReference type="NCBI Taxonomy" id="9606"/>
</organismHost>
<organismHost>
    <name type="scientific">Sus scrofa</name>
    <name type="common">Pig</name>
    <dbReference type="NCBI Taxonomy" id="9823"/>
</organismHost>
<keyword id="KW-0007">Acetylation</keyword>
<keyword id="KW-1072">Activation of host autophagy by virus</keyword>
<keyword id="KW-0067">ATP-binding</keyword>
<keyword id="KW-0167">Capsid protein</keyword>
<keyword id="KW-1165">Clathrin-mediated endocytosis of virus by host</keyword>
<keyword id="KW-0165">Cleavage on pair of basic residues</keyword>
<keyword id="KW-1015">Disulfide bond</keyword>
<keyword id="KW-1170">Fusion of virus membrane with host endosomal membrane</keyword>
<keyword id="KW-1168">Fusion of virus membrane with host membrane</keyword>
<keyword id="KW-0325">Glycoprotein</keyword>
<keyword id="KW-0347">Helicase</keyword>
<keyword id="KW-1035">Host cytoplasm</keyword>
<keyword id="KW-1038">Host endoplasmic reticulum</keyword>
<keyword id="KW-1043">Host membrane</keyword>
<keyword id="KW-1048">Host nucleus</keyword>
<keyword id="KW-0945">Host-virus interaction</keyword>
<keyword id="KW-0378">Hydrolase</keyword>
<keyword id="KW-1090">Inhibition of host innate immune response by virus</keyword>
<keyword id="KW-1114">Inhibition of host interferon signaling pathway by virus</keyword>
<keyword id="KW-1105">Inhibition of host STAT1 by virus</keyword>
<keyword id="KW-1106">Inhibition of host STAT2 by virus</keyword>
<keyword id="KW-1112">Inhibition of host TYK2 by virus</keyword>
<keyword id="KW-0922">Interferon antiviral system evasion</keyword>
<keyword id="KW-0472">Membrane</keyword>
<keyword id="KW-0479">Metal-binding</keyword>
<keyword id="KW-0489">Methyltransferase</keyword>
<keyword id="KW-0506">mRNA capping</keyword>
<keyword id="KW-0507">mRNA processing</keyword>
<keyword id="KW-0511">Multifunctional enzyme</keyword>
<keyword id="KW-0547">Nucleotide-binding</keyword>
<keyword id="KW-0548">Nucleotidyltransferase</keyword>
<keyword id="KW-0597">Phosphoprotein</keyword>
<keyword id="KW-0645">Protease</keyword>
<keyword id="KW-0688">Ribosomal frameshifting</keyword>
<keyword id="KW-0694">RNA-binding</keyword>
<keyword id="KW-0696">RNA-directed RNA polymerase</keyword>
<keyword id="KW-0949">S-adenosyl-L-methionine</keyword>
<keyword id="KW-0964">Secreted</keyword>
<keyword id="KW-0720">Serine protease</keyword>
<keyword id="KW-0941">Suppressor of RNA silencing</keyword>
<keyword id="KW-0804">Transcription</keyword>
<keyword id="KW-0805">Transcription regulation</keyword>
<keyword id="KW-0808">Transferase</keyword>
<keyword id="KW-0812">Transmembrane</keyword>
<keyword id="KW-1133">Transmembrane helix</keyword>
<keyword id="KW-1161">Viral attachment to host cell</keyword>
<keyword id="KW-0261">Viral envelope protein</keyword>
<keyword id="KW-0899">Viral immunoevasion</keyword>
<keyword id="KW-1162">Viral penetration into host cytoplasm</keyword>
<keyword id="KW-0693">Viral RNA replication</keyword>
<keyword id="KW-0946">Virion</keyword>
<keyword id="KW-1164">Virus endocytosis by host</keyword>
<keyword id="KW-1160">Virus entry into host cell</keyword>
<keyword id="KW-0862">Zinc</keyword>
<feature type="chain" id="PRO_0000447381" description="Genome polyprotein">
    <location>
        <begin position="1"/>
        <end position="3432"/>
    </location>
</feature>
<feature type="chain" id="PRO_0000447382" description="Capsid protein C">
    <location>
        <begin position="1"/>
        <end position="105"/>
    </location>
</feature>
<feature type="propeptide" id="PRO_0000447383" description="ER anchor for the capsid protein C, removed in mature form by serine protease NS3">
    <location>
        <begin position="106"/>
        <end position="127"/>
    </location>
</feature>
<feature type="chain" id="PRO_0000447384" description="Protein prM">
    <location>
        <begin position="128"/>
        <end position="294"/>
    </location>
</feature>
<feature type="chain" id="PRO_0000447385" description="Peptide pr">
    <location>
        <begin position="128"/>
        <end position="219"/>
    </location>
</feature>
<feature type="chain" id="PRO_0000447386" description="Small envelope protein M">
    <location>
        <begin position="220"/>
        <end position="294"/>
    </location>
</feature>
<feature type="chain" id="PRO_0000447387" description="Envelope protein E">
    <location>
        <begin position="295"/>
        <end position="794"/>
    </location>
</feature>
<feature type="chain" id="PRO_0000447388" description="Non-structural protein 1">
    <location>
        <begin position="795"/>
        <end position="1146"/>
    </location>
</feature>
<feature type="chain" id="PRO_0000447389" description="Non-structural protein 2A">
    <location>
        <begin position="1147"/>
        <end position="1373"/>
    </location>
</feature>
<feature type="chain" id="PRO_0000447390" description="Serine protease subunit NS2B">
    <location>
        <begin position="1374"/>
        <end position="1504"/>
    </location>
</feature>
<feature type="chain" id="PRO_0000447391" description="Serine protease NS3">
    <location>
        <begin position="1505"/>
        <end position="2123"/>
    </location>
</feature>
<feature type="chain" id="PRO_0000447392" description="Non-structural protein 4A">
    <location>
        <begin position="2124"/>
        <end position="2249"/>
    </location>
</feature>
<feature type="peptide" id="PRO_0000447393" description="Peptide 2k">
    <location>
        <begin position="2250"/>
        <end position="2272"/>
    </location>
</feature>
<feature type="chain" id="PRO_0000447394" description="Non-structural protein 4B">
    <location>
        <begin position="2273"/>
        <end position="2527"/>
    </location>
</feature>
<feature type="chain" id="PRO_0000447395" description="RNA-directed RNA polymerase NS5">
    <location>
        <begin position="2528"/>
        <end position="3432"/>
    </location>
</feature>
<feature type="topological domain" description="Cytoplasmic" evidence="12">
    <location>
        <begin position="2"/>
        <end position="109"/>
    </location>
</feature>
<feature type="transmembrane region" description="Helical" evidence="12">
    <location>
        <begin position="110"/>
        <end position="130"/>
    </location>
</feature>
<feature type="topological domain" description="Extracellular" evidence="12">
    <location>
        <begin position="131"/>
        <end position="253"/>
    </location>
</feature>
<feature type="transmembrane region" description="Helical" evidence="12">
    <location>
        <begin position="254"/>
        <end position="274"/>
    </location>
</feature>
<feature type="topological domain" description="Cytoplasmic" evidence="12">
    <location>
        <begin position="275"/>
        <end position="279"/>
    </location>
</feature>
<feature type="transmembrane region" description="Helical" evidence="20">
    <location>
        <begin position="280"/>
        <end position="294"/>
    </location>
</feature>
<feature type="topological domain" description="Extracellular" evidence="12">
    <location>
        <begin position="295"/>
        <end position="746"/>
    </location>
</feature>
<feature type="transmembrane region" description="Helical" evidence="12">
    <location>
        <begin position="747"/>
        <end position="767"/>
    </location>
</feature>
<feature type="topological domain" description="Cytoplasmic" evidence="12">
    <location>
        <begin position="768"/>
        <end position="773"/>
    </location>
</feature>
<feature type="transmembrane region" description="Helical" evidence="12">
    <location>
        <begin position="774"/>
        <end position="794"/>
    </location>
</feature>
<feature type="topological domain" description="Extracellular" evidence="12">
    <location>
        <begin position="795"/>
        <end position="1219"/>
    </location>
</feature>
<feature type="transmembrane region" description="Helical" evidence="12">
    <location>
        <begin position="1220"/>
        <end position="1240"/>
    </location>
</feature>
<feature type="topological domain" description="Cytoplasmic" evidence="12">
    <location>
        <begin position="1241"/>
        <end position="1250"/>
    </location>
</feature>
<feature type="transmembrane region" description="Helical" evidence="12">
    <location>
        <begin position="1251"/>
        <end position="1271"/>
    </location>
</feature>
<feature type="topological domain" description="Lumenal" evidence="12">
    <location>
        <position position="1272"/>
    </location>
</feature>
<feature type="transmembrane region" description="Helical" evidence="12">
    <location>
        <begin position="1273"/>
        <end position="1293"/>
    </location>
</feature>
<feature type="topological domain" description="Cytoplasmic" evidence="12">
    <location>
        <begin position="1294"/>
        <end position="1309"/>
    </location>
</feature>
<feature type="transmembrane region" description="Helical" evidence="12">
    <location>
        <begin position="1310"/>
        <end position="1330"/>
    </location>
</feature>
<feature type="topological domain" description="Lumenal" evidence="12">
    <location>
        <begin position="1331"/>
        <end position="1341"/>
    </location>
</feature>
<feature type="transmembrane region" description="Helical" evidence="12">
    <location>
        <begin position="1342"/>
        <end position="1362"/>
    </location>
</feature>
<feature type="topological domain" description="Cytoplasmic" evidence="12">
    <location>
        <begin position="1363"/>
        <end position="1374"/>
    </location>
</feature>
<feature type="transmembrane region" description="Helical" evidence="12">
    <location>
        <begin position="1375"/>
        <end position="1395"/>
    </location>
</feature>
<feature type="topological domain" description="Lumenal" evidence="12">
    <location>
        <begin position="1396"/>
        <end position="1398"/>
    </location>
</feature>
<feature type="transmembrane region" description="Helical" evidence="12">
    <location>
        <begin position="1399"/>
        <end position="1419"/>
    </location>
</feature>
<feature type="topological domain" description="Cytoplasmic" evidence="12">
    <location>
        <begin position="1420"/>
        <end position="1476"/>
    </location>
</feature>
<feature type="intramembrane region" description="Helical" evidence="12">
    <location>
        <begin position="1477"/>
        <end position="1497"/>
    </location>
</feature>
<feature type="topological domain" description="Cytoplasmic" evidence="12">
    <location>
        <begin position="1498"/>
        <end position="2173"/>
    </location>
</feature>
<feature type="transmembrane region" description="Helical" evidence="12">
    <location>
        <begin position="2174"/>
        <end position="2194"/>
    </location>
</feature>
<feature type="topological domain" description="Lumenal" evidence="12">
    <location>
        <begin position="2195"/>
        <end position="2199"/>
    </location>
</feature>
<feature type="intramembrane region" description="Helical" evidence="12">
    <location>
        <begin position="2200"/>
        <end position="2220"/>
    </location>
</feature>
<feature type="topological domain" description="Lumenal" evidence="12">
    <location>
        <position position="2221"/>
    </location>
</feature>
<feature type="transmembrane region" description="Helical" evidence="12">
    <location>
        <begin position="2222"/>
        <end position="2242"/>
    </location>
</feature>
<feature type="topological domain" description="Cytoplasmic" evidence="12">
    <location>
        <begin position="2243"/>
        <end position="2257"/>
    </location>
</feature>
<feature type="transmembrane region" description="Helical; Note=Signal for NS4B" evidence="12">
    <location>
        <begin position="2258"/>
        <end position="2278"/>
    </location>
</feature>
<feature type="topological domain" description="Lumenal" evidence="12">
    <location>
        <begin position="2279"/>
        <end position="2311"/>
    </location>
</feature>
<feature type="intramembrane region" description="Helical" evidence="12">
    <location>
        <begin position="2312"/>
        <end position="2332"/>
    </location>
</feature>
<feature type="topological domain" description="Lumenal" evidence="12">
    <location>
        <begin position="2333"/>
        <end position="2368"/>
    </location>
</feature>
<feature type="transmembrane region" description="Helical" evidence="12">
    <location>
        <begin position="2369"/>
        <end position="2389"/>
    </location>
</feature>
<feature type="topological domain" description="Cytoplasmic" evidence="12">
    <location>
        <begin position="2390"/>
        <end position="2444"/>
    </location>
</feature>
<feature type="transmembrane region" description="Helical" evidence="12">
    <location>
        <begin position="2445"/>
        <end position="2465"/>
    </location>
</feature>
<feature type="topological domain" description="Lumenal" evidence="12">
    <location>
        <begin position="2466"/>
        <end position="2469"/>
    </location>
</feature>
<feature type="transmembrane region" description="Helical" evidence="12">
    <location>
        <begin position="2470"/>
        <end position="2490"/>
    </location>
</feature>
<feature type="topological domain" description="Cytoplasmic" evidence="12">
    <location>
        <begin position="2491"/>
        <end position="3432"/>
    </location>
</feature>
<feature type="domain" description="Peptidase S7" evidence="17">
    <location>
        <begin position="1505"/>
        <end position="1682"/>
    </location>
</feature>
<feature type="domain" description="Helicase ATP-binding" evidence="14">
    <location>
        <begin position="1685"/>
        <end position="1841"/>
    </location>
</feature>
<feature type="domain" description="Helicase C-terminal" evidence="15">
    <location>
        <begin position="1852"/>
        <end position="2017"/>
    </location>
</feature>
<feature type="domain" description="mRNA cap 0-1 NS5-type MT" evidence="18">
    <location>
        <begin position="2528"/>
        <end position="2793"/>
    </location>
</feature>
<feature type="domain" description="RdRp catalytic" evidence="13">
    <location>
        <begin position="3057"/>
        <end position="3209"/>
    </location>
</feature>
<feature type="region of interest" description="Interaction with host EXOC1" evidence="2">
    <location>
        <begin position="2"/>
        <end position="15"/>
    </location>
</feature>
<feature type="region of interest" description="Hydrophobic; homodimerization of capsid protein C" evidence="8">
    <location>
        <begin position="37"/>
        <end position="72"/>
    </location>
</feature>
<feature type="region of interest" description="Fusion peptide" evidence="4">
    <location>
        <begin position="392"/>
        <end position="405"/>
    </location>
</feature>
<feature type="region of interest" description="Interacts with and activates NS3 protease" evidence="16">
    <location>
        <begin position="1427"/>
        <end position="1466"/>
    </location>
</feature>
<feature type="region of interest" description="Important for RNA-binding" evidence="5">
    <location>
        <begin position="1689"/>
        <end position="1692"/>
    </location>
</feature>
<feature type="region of interest" description="Disordered" evidence="19">
    <location>
        <begin position="1950"/>
        <end position="1969"/>
    </location>
</feature>
<feature type="region of interest" description="Regulates the ATPase activity of NS3 helicase" evidence="11">
    <location>
        <begin position="2168"/>
        <end position="2172"/>
    </location>
</feature>
<feature type="short sequence motif" description="DEAH box" evidence="14">
    <location>
        <begin position="1789"/>
        <end position="1792"/>
    </location>
</feature>
<feature type="active site" description="Charge relay system; for serine protease NS3 activity" evidence="17">
    <location>
        <position position="1555"/>
    </location>
</feature>
<feature type="active site" description="Charge relay system; for serine protease NS3 activity" evidence="17">
    <location>
        <position position="1579"/>
    </location>
</feature>
<feature type="active site" description="Charge relay system; for serine protease NS3 activity" evidence="17">
    <location>
        <position position="1639"/>
    </location>
</feature>
<feature type="active site" description="For 2'-O-MTase activity" evidence="10">
    <location>
        <position position="2588"/>
    </location>
</feature>
<feature type="active site" description="For 2'-O-MTase activity" evidence="10">
    <location>
        <position position="2673"/>
    </location>
</feature>
<feature type="active site" description="For 2'-O-MTase activity" evidence="10">
    <location>
        <position position="2709"/>
    </location>
</feature>
<feature type="active site" description="For 2'-O-MTase activity" evidence="10">
    <location>
        <position position="2745"/>
    </location>
</feature>
<feature type="binding site" evidence="14">
    <location>
        <begin position="1698"/>
        <end position="1705"/>
    </location>
    <ligand>
        <name>ATP</name>
        <dbReference type="ChEBI" id="CHEBI:30616"/>
    </ligand>
</feature>
<feature type="binding site" evidence="18">
    <location>
        <position position="2583"/>
    </location>
    <ligand>
        <name>S-adenosyl-L-methionine</name>
        <dbReference type="ChEBI" id="CHEBI:59789"/>
    </ligand>
</feature>
<feature type="binding site" evidence="18">
    <location>
        <position position="2613"/>
    </location>
    <ligand>
        <name>S-adenosyl-L-methionine</name>
        <dbReference type="ChEBI" id="CHEBI:59789"/>
    </ligand>
</feature>
<feature type="binding site" evidence="18">
    <location>
        <position position="2614"/>
    </location>
    <ligand>
        <name>S-adenosyl-L-methionine</name>
        <dbReference type="ChEBI" id="CHEBI:59789"/>
    </ligand>
</feature>
<feature type="binding site" evidence="18">
    <location>
        <position position="2631"/>
    </location>
    <ligand>
        <name>S-adenosyl-L-methionine</name>
        <dbReference type="ChEBI" id="CHEBI:59789"/>
    </ligand>
</feature>
<feature type="binding site" evidence="18">
    <location>
        <position position="2632"/>
    </location>
    <ligand>
        <name>S-adenosyl-L-methionine</name>
        <dbReference type="ChEBI" id="CHEBI:59789"/>
    </ligand>
</feature>
<feature type="binding site" evidence="18">
    <location>
        <position position="2658"/>
    </location>
    <ligand>
        <name>S-adenosyl-L-methionine</name>
        <dbReference type="ChEBI" id="CHEBI:59789"/>
    </ligand>
</feature>
<feature type="binding site" evidence="18">
    <location>
        <position position="2659"/>
    </location>
    <ligand>
        <name>S-adenosyl-L-methionine</name>
        <dbReference type="ChEBI" id="CHEBI:59789"/>
    </ligand>
</feature>
<feature type="binding site" evidence="18">
    <location>
        <position position="2674"/>
    </location>
    <ligand>
        <name>S-adenosyl-L-methionine</name>
        <dbReference type="ChEBI" id="CHEBI:59789"/>
    </ligand>
</feature>
<feature type="binding site" evidence="18">
    <location>
        <position position="2747"/>
    </location>
    <ligand>
        <name>S-adenosyl-L-methionine</name>
        <dbReference type="ChEBI" id="CHEBI:59789"/>
    </ligand>
</feature>
<feature type="binding site" evidence="7">
    <location>
        <position position="2967"/>
    </location>
    <ligand>
        <name>Zn(2+)</name>
        <dbReference type="ChEBI" id="CHEBI:29105"/>
        <label>1</label>
    </ligand>
</feature>
<feature type="binding site" evidence="7">
    <location>
        <position position="2971"/>
    </location>
    <ligand>
        <name>Zn(2+)</name>
        <dbReference type="ChEBI" id="CHEBI:29105"/>
        <label>1</label>
    </ligand>
</feature>
<feature type="binding site" evidence="7">
    <location>
        <position position="2976"/>
    </location>
    <ligand>
        <name>Zn(2+)</name>
        <dbReference type="ChEBI" id="CHEBI:29105"/>
        <label>1</label>
    </ligand>
</feature>
<feature type="binding site" evidence="7">
    <location>
        <position position="2979"/>
    </location>
    <ligand>
        <name>Zn(2+)</name>
        <dbReference type="ChEBI" id="CHEBI:29105"/>
        <label>1</label>
    </ligand>
</feature>
<feature type="binding site" evidence="7">
    <location>
        <position position="3244"/>
    </location>
    <ligand>
        <name>Zn(2+)</name>
        <dbReference type="ChEBI" id="CHEBI:29105"/>
        <label>2</label>
    </ligand>
</feature>
<feature type="binding site" evidence="7">
    <location>
        <position position="3260"/>
    </location>
    <ligand>
        <name>Zn(2+)</name>
        <dbReference type="ChEBI" id="CHEBI:29105"/>
        <label>2</label>
    </ligand>
</feature>
<feature type="binding site" evidence="7">
    <location>
        <position position="3379"/>
    </location>
    <ligand>
        <name>Zn(2+)</name>
        <dbReference type="ChEBI" id="CHEBI:29105"/>
        <label>2</label>
    </ligand>
</feature>
<feature type="site" description="Cleavage; by viral protease NS3" evidence="12">
    <location>
        <begin position="105"/>
        <end position="106"/>
    </location>
</feature>
<feature type="site" description="Cleavage; by host signal peptidase" evidence="2">
    <location>
        <begin position="127"/>
        <end position="128"/>
    </location>
</feature>
<feature type="site" description="Cleavage; by host furin" evidence="2">
    <location>
        <begin position="219"/>
        <end position="220"/>
    </location>
</feature>
<feature type="site" description="Cleavage; by host signal peptidase" evidence="2">
    <location>
        <begin position="294"/>
        <end position="295"/>
    </location>
</feature>
<feature type="site" description="Cleavage; by host signal peptidase" evidence="2">
    <location>
        <begin position="794"/>
        <end position="795"/>
    </location>
</feature>
<feature type="site" description="Cleavage; by host" evidence="2">
    <location>
        <begin position="1146"/>
        <end position="1147"/>
    </location>
</feature>
<feature type="site" description="Cleavage; by viral protease NS3" evidence="2">
    <location>
        <begin position="1373"/>
        <end position="1374"/>
    </location>
</feature>
<feature type="site" description="Cleavage; by autolysis" evidence="2">
    <location>
        <begin position="1504"/>
        <end position="1505"/>
    </location>
</feature>
<feature type="site" description="Involved in NS3 ATPase and RTPase activities" evidence="3">
    <location>
        <position position="1962"/>
    </location>
</feature>
<feature type="site" description="Involved in NS3 ATPase and RTPase activities" evidence="3">
    <location>
        <position position="1965"/>
    </location>
</feature>
<feature type="site" description="Cleavage; by autolysis" evidence="2">
    <location>
        <begin position="2123"/>
        <end position="2124"/>
    </location>
</feature>
<feature type="site" description="Cleavage; by viral protease NS3" evidence="2">
    <location>
        <begin position="2249"/>
        <end position="2250"/>
    </location>
</feature>
<feature type="site" description="Cleavage; by host signal peptidase" evidence="2">
    <location>
        <begin position="2272"/>
        <end position="2273"/>
    </location>
</feature>
<feature type="site" description="Cleavage; by viral protease NS3" evidence="2">
    <location>
        <begin position="2527"/>
        <end position="2528"/>
    </location>
</feature>
<feature type="site" description="mRNA cap binding" evidence="18">
    <location>
        <position position="2540"/>
    </location>
</feature>
<feature type="site" description="mRNA cap binding; via carbonyl oxygen" evidence="18">
    <location>
        <position position="2543"/>
    </location>
</feature>
<feature type="site" description="mRNA cap binding" evidence="18">
    <location>
        <position position="2544"/>
    </location>
</feature>
<feature type="site" description="mRNA cap binding; via carbonyl oxygen" evidence="18">
    <location>
        <position position="2546"/>
    </location>
</feature>
<feature type="site" description="mRNA cap binding" evidence="18">
    <location>
        <position position="2551"/>
    </location>
</feature>
<feature type="site" description="mRNA cap binding" evidence="18">
    <location>
        <position position="2555"/>
    </location>
</feature>
<feature type="site" description="Essential for 2'-O-methyltransferase activity" evidence="18">
    <location>
        <position position="2588"/>
    </location>
</feature>
<feature type="site" description="Essential for 2'-O-methyltransferase and N-7 methyltransferase activity" evidence="18">
    <location>
        <position position="2673"/>
    </location>
</feature>
<feature type="site" description="mRNA cap binding" evidence="18">
    <location>
        <position position="2677"/>
    </location>
</feature>
<feature type="site" description="Essential for 2'-O-methyltransferase activity" evidence="18">
    <location>
        <position position="2709"/>
    </location>
</feature>
<feature type="site" description="mRNA cap binding" evidence="18">
    <location>
        <position position="2740"/>
    </location>
</feature>
<feature type="site" description="mRNA cap binding" evidence="18">
    <location>
        <position position="2742"/>
    </location>
</feature>
<feature type="site" description="Essential for 2'-O-methyltransferase activity" evidence="18">
    <location>
        <position position="2745"/>
    </location>
</feature>
<feature type="modified residue" description="N6-acetyllysine; by host" evidence="9">
    <location>
        <position position="1893"/>
    </location>
</feature>
<feature type="modified residue" description="Phosphoserine" evidence="1">
    <location>
        <position position="2583"/>
    </location>
</feature>
<feature type="glycosylation site" description="N-linked (GlcNAc...) asparagine; by host" evidence="3">
    <location>
        <position position="142"/>
    </location>
</feature>
<feature type="glycosylation site" description="N-linked (GlcNAc...) asparagine; by host" evidence="12">
    <location>
        <position position="448"/>
    </location>
</feature>
<feature type="glycosylation site" description="N-linked (GlcNAc...) asparagine; by host" evidence="11">
    <location>
        <position position="924"/>
    </location>
</feature>
<feature type="glycosylation site" description="N-linked (GlcNAc...) asparagine; by host" evidence="11">
    <location>
        <position position="1001"/>
    </location>
</feature>
<feature type="disulfide bond" evidence="11">
    <location>
        <begin position="297"/>
        <end position="324"/>
    </location>
</feature>
<feature type="disulfide bond" evidence="11">
    <location>
        <begin position="354"/>
        <end position="415"/>
    </location>
</feature>
<feature type="disulfide bond" evidence="2">
    <location>
        <begin position="354"/>
        <end position="410"/>
    </location>
</feature>
<feature type="disulfide bond" evidence="11">
    <location>
        <begin position="368"/>
        <end position="399"/>
    </location>
</feature>
<feature type="disulfide bond" evidence="2">
    <location>
        <begin position="386"/>
        <end position="415"/>
    </location>
</feature>
<feature type="disulfide bond" evidence="11">
    <location>
        <begin position="386"/>
        <end position="410"/>
    </location>
</feature>
<feature type="disulfide bond" evidence="11">
    <location>
        <begin position="484"/>
        <end position="581"/>
    </location>
</feature>
<feature type="disulfide bond" evidence="11">
    <location>
        <begin position="598"/>
        <end position="629"/>
    </location>
</feature>
<feature type="disulfide bond" evidence="11">
    <location>
        <begin position="798"/>
        <end position="809"/>
    </location>
</feature>
<feature type="disulfide bond" evidence="11">
    <location>
        <begin position="849"/>
        <end position="937"/>
    </location>
</feature>
<feature type="disulfide bond" evidence="11">
    <location>
        <begin position="973"/>
        <end position="1017"/>
    </location>
</feature>
<feature type="disulfide bond" evidence="11">
    <location>
        <begin position="1074"/>
        <end position="1123"/>
    </location>
</feature>
<feature type="disulfide bond" evidence="11">
    <location>
        <begin position="1085"/>
        <end position="1106"/>
    </location>
</feature>
<feature type="disulfide bond" evidence="11">
    <location>
        <begin position="1107"/>
        <end position="1110"/>
    </location>
</feature>
<feature type="sequence conflict" description="In Ref. 2; AMY26915." evidence="20" ref="2">
    <original>N</original>
    <variation>D</variation>
    <location>
        <position position="969"/>
    </location>
</feature>
<comment type="function">
    <molecule>Capsid protein C</molecule>
    <text evidence="6">Plays a role in virus budding by binding to the cell membrane and gathering the viral RNA into a nucleocapsid that forms the core of a mature virus particle. During virus entry, may induce genome penetration into the host cytoplasm after hemifusion induced by the surface proteins. Can migrate to the cell nucleus where it modulates host functions. Overcomes the anti-viral effects of host EXOC1 by sequestering and degrading the latter through the proteasome degradation pathway.</text>
</comment>
<comment type="function">
    <molecule>Capsid protein C</molecule>
    <text evidence="1">Inhibits RNA silencing by interfering with host Dicer.</text>
</comment>
<comment type="function">
    <molecule>Peptide pr</molecule>
    <text evidence="6">Prevents premature fusion activity of envelope proteins in trans-Golgi by binding to envelope protein E at pH6.0. After virion release in extracellular space, gets dissociated from E dimers.</text>
</comment>
<comment type="function">
    <molecule>Protein prM</molecule>
    <text evidence="6">Acts as a chaperone for envelope protein E during intracellular virion assembly by masking and inactivating envelope protein E fusion peptide. prM is the only viral peptide matured by host furin in the trans-Golgi network probably to avoid catastrophic activation of the viral fusion activity in acidic Golgi compartment prior to virion release. prM-E cleavage is inefficient, and many virions are only partially matured. These uncleaved prM would play a role in immune evasion.</text>
</comment>
<comment type="function">
    <molecule>Small envelope protein M</molecule>
    <text evidence="6">May play a role in virus budding. Exerts cytotoxic effects by activating a mitochondrial apoptotic pathway through M ectodomain. May display a viroporin activity.</text>
</comment>
<comment type="function">
    <molecule>Envelope protein E</molecule>
    <text evidence="6">Binds to host cell surface receptor and mediates fusion between viral and cellular membranes. Efficient virus attachment to cell is, at least in part, mediated by host HSPA5. Envelope protein is synthesized in the endoplasmic reticulum in the form of heterodimer with protein prM. They play a role in virion budding in the ER, and the newly formed immature particle is covered with 60 spikes composed of heterodimer between precursor prM and envelope protein E. The virion is transported to the Golgi apparatus where the low pH causes dissociation of PrM-E heterodimers and formation of E homodimers. prM-E cleavage is inefficient, and many virions are only partially matured. These uncleaved prM would play a role in immune evasion.</text>
</comment>
<comment type="function">
    <molecule>Non-structural protein 1</molecule>
    <text evidence="11">Involved in immune evasion, pathogenesis and viral replication. Once cleaved off the polyprotein, is targeted to three destinations: the viral replication cycle, the plasma membrane and the extracellular compartment. Essential for viral replication. Required for formation of the replication complex and recruitment of other non-structural proteins to the ER-derived membrane structures. Excreted as a hexameric lipoparticle that plays a role against host immune response. Antagonizing the complement function. Binds to the host macrophages and dendritic cells. Inhibits signal transduction originating from Toll-like receptor 3 (TLR3).</text>
</comment>
<comment type="function">
    <molecule>Non-structural protein 2A</molecule>
    <text evidence="3">Component of the viral RNA replication complex that functions in virion assembly and antagonizes the host alpha/beta interferon antiviral response.</text>
</comment>
<comment type="function">
    <molecule>Serine protease subunit NS2B</molecule>
    <text evidence="6 7">Required cofactor for the serine protease function of NS3 (By similarity). May have membrane-destabilizing activity and form viroporins (By similarity).</text>
</comment>
<comment type="function">
    <molecule>Serine protease NS3</molecule>
    <text evidence="17">Displays three enzymatic activities: serine protease, NTPase and RNA helicase. NS3 serine protease, in association with NS2B, performs its autocleavage and cleaves the polyprotein at dibasic sites in the cytoplasm: C-prM, NS2A-NS2B, NS2B-NS3, NS3-NS4A, NS4A-2K and NS4B-NS5. NS3 RNA helicase binds RNA and unwinds dsRNA in the 3' to 5' direction.</text>
</comment>
<comment type="function">
    <molecule>Non-structural protein 4A</molecule>
    <text evidence="11">Regulates the ATPase activity of the NS3 helicase activity (By similarity). NS4A allows NS3 helicase to conserve energy during unwinding (By similarity).</text>
</comment>
<comment type="function">
    <molecule>Peptide 2k</molecule>
    <text evidence="6">Functions as a signal peptide for NS4B and is required for the interferon antagonism activity of the latter.</text>
</comment>
<comment type="function">
    <molecule>Non-structural protein 4B</molecule>
    <text evidence="11">Induces the formation of ER-derived membrane vesicles where the viral replication takes place (By similarity). Inhibits interferon (IFN)-induced host STAT1 phosphorylation and nuclear translocation, thereby preventing the establishment of cellular antiviral state by blocking the IFN-alpha/beta pathway (By similarity). Inhibits STAT2 translocation in the nucleus after IFN-alpha treatment (By similarity).</text>
</comment>
<comment type="function">
    <molecule>RNA-directed RNA polymerase NS5</molecule>
    <text evidence="7 11">Replicates the viral (+) and (-) RNA genome (By similarity). Performs the capping of genomes in the cytoplasm. NS5 methylates viral RNA cap at guanine N-7 and ribose 2'-O positions (By similarity). Besides its role in RNA genome replication, also prevents the establishment of cellular antiviral state by blocking the interferon-alpha/beta (IFN-alpha/beta) signaling pathway (By similarity). Inhibits host TYK2 and STAT2 phosphorylation, thereby preventing activation of JAK-STAT signaling pathway (By similarity).</text>
</comment>
<comment type="catalytic activity">
    <reaction evidence="7">
        <text>Selective hydrolysis of -Xaa-Xaa-|-Yaa- bonds in which each of the Xaa can be either Arg or Lys and Yaa can be either Ser or Ala.</text>
        <dbReference type="EC" id="3.4.21.91"/>
    </reaction>
</comment>
<comment type="catalytic activity">
    <reaction evidence="7">
        <text>a ribonucleoside 5'-triphosphate + H2O = a ribonucleoside 5'-diphosphate + phosphate + H(+)</text>
        <dbReference type="Rhea" id="RHEA:23680"/>
        <dbReference type="ChEBI" id="CHEBI:15377"/>
        <dbReference type="ChEBI" id="CHEBI:15378"/>
        <dbReference type="ChEBI" id="CHEBI:43474"/>
        <dbReference type="ChEBI" id="CHEBI:57930"/>
        <dbReference type="ChEBI" id="CHEBI:61557"/>
        <dbReference type="EC" id="3.6.1.15"/>
    </reaction>
</comment>
<comment type="catalytic activity">
    <reaction evidence="13">
        <text>RNA(n) + a ribonucleoside 5'-triphosphate = RNA(n+1) + diphosphate</text>
        <dbReference type="Rhea" id="RHEA:21248"/>
        <dbReference type="Rhea" id="RHEA-COMP:14527"/>
        <dbReference type="Rhea" id="RHEA-COMP:17342"/>
        <dbReference type="ChEBI" id="CHEBI:33019"/>
        <dbReference type="ChEBI" id="CHEBI:61557"/>
        <dbReference type="ChEBI" id="CHEBI:140395"/>
        <dbReference type="EC" id="2.7.7.48"/>
    </reaction>
</comment>
<comment type="catalytic activity">
    <reaction evidence="7">
        <text>ATP + H2O = ADP + phosphate + H(+)</text>
        <dbReference type="Rhea" id="RHEA:13065"/>
        <dbReference type="ChEBI" id="CHEBI:15377"/>
        <dbReference type="ChEBI" id="CHEBI:15378"/>
        <dbReference type="ChEBI" id="CHEBI:30616"/>
        <dbReference type="ChEBI" id="CHEBI:43474"/>
        <dbReference type="ChEBI" id="CHEBI:456216"/>
        <dbReference type="EC" id="3.6.4.13"/>
    </reaction>
</comment>
<comment type="catalytic activity">
    <reaction evidence="18">
        <text>a 5'-end (5'-triphosphoguanosine)-ribonucleoside in mRNA + S-adenosyl-L-methionine = a 5'-end (N(7)-methyl 5'-triphosphoguanosine)-ribonucleoside in mRNA + S-adenosyl-L-homocysteine</text>
        <dbReference type="Rhea" id="RHEA:67008"/>
        <dbReference type="Rhea" id="RHEA-COMP:17166"/>
        <dbReference type="Rhea" id="RHEA-COMP:17167"/>
        <dbReference type="ChEBI" id="CHEBI:57856"/>
        <dbReference type="ChEBI" id="CHEBI:59789"/>
        <dbReference type="ChEBI" id="CHEBI:156461"/>
        <dbReference type="ChEBI" id="CHEBI:167617"/>
        <dbReference type="EC" id="2.1.1.56"/>
    </reaction>
</comment>
<comment type="catalytic activity">
    <reaction evidence="18">
        <text>a 5'-end (N(7)-methyl 5'-triphosphoguanosine)-ribonucleoside in mRNA + S-adenosyl-L-methionine = a 5'-end (N(7)-methyl 5'-triphosphoguanosine)-(2'-O-methyl-ribonucleoside) in mRNA + S-adenosyl-L-homocysteine + H(+)</text>
        <dbReference type="Rhea" id="RHEA:67020"/>
        <dbReference type="Rhea" id="RHEA-COMP:17167"/>
        <dbReference type="Rhea" id="RHEA-COMP:17168"/>
        <dbReference type="ChEBI" id="CHEBI:15378"/>
        <dbReference type="ChEBI" id="CHEBI:57856"/>
        <dbReference type="ChEBI" id="CHEBI:59789"/>
        <dbReference type="ChEBI" id="CHEBI:156461"/>
        <dbReference type="ChEBI" id="CHEBI:167609"/>
        <dbReference type="EC" id="2.1.1.57"/>
    </reaction>
</comment>
<comment type="cofactor">
    <cofactor>
        <name>Mn(2+)</name>
        <dbReference type="ChEBI" id="CHEBI:29035"/>
    </cofactor>
    <cofactor>
        <name>Mg(2+)</name>
        <dbReference type="ChEBI" id="CHEBI:18420"/>
    </cofactor>
    <text evidence="7">For RNA-directed RNA polymerase NS5 activity; Mn(2+) is more effective than Mg(2+).</text>
</comment>
<comment type="subunit">
    <molecule>Capsid protein C</molecule>
    <text evidence="6">Homodimer (By similarity). Interacts (via N-terminus) with host EXOC1 (via C-terminus); this interaction results in EXOC1 degradation through the proteasome degradation pathway (By similarity).</text>
</comment>
<comment type="subunit">
    <molecule>Protein prM</molecule>
    <text evidence="6">Forms heterodimers with envelope protein E in the endoplasmic reticulum and Golgi.</text>
</comment>
<comment type="subunit">
    <molecule>Envelope protein E</molecule>
    <text evidence="6">Homodimer; in the endoplasmic reticulum and Golgi (By similarity). Interacts with protein prM (By similarity). Interacts with non-structural protein 1 (By similarity). Interacts with host HSPA5 (By similarity).</text>
</comment>
<comment type="subunit">
    <molecule>Non-structural protein 1</molecule>
    <text evidence="11">Homodimer; Homohexamer when secreted (By similarity). Interacts with envelope protein E (By similarity). NS1 interacts with NS4B (By similarity). Interacts with host complement protein CFH; this interaction leads to the degradation of C3 (By similarity).</text>
</comment>
<comment type="subunit">
    <molecule>Non-structural protein 2A</molecule>
    <text evidence="1">Interacts (via N-terminus) with serine protease NS3.</text>
</comment>
<comment type="subunit">
    <molecule>Serine protease subunit NS2B</molecule>
    <text evidence="6">Forms a heterodimer with serine protease NS3 (By similarity). May form homooligomers (By similarity).</text>
</comment>
<comment type="subunit">
    <molecule>Serine protease NS3</molecule>
    <text evidence="6">Forms a heterodimer with NS2B (By similarity). Interacts with non-structural protein 2A (via N-terminus) (By similarity). Interacts with NS4B (By similarity). Interacts with unphosphorylated RNA-directed RNA polymerase NS5; this interaction stimulates RNA-directed RNA polymerase NS5 guanylyltransferase activity (By similarity). Interacts with host ILF2 (By similarity).</text>
</comment>
<comment type="subunit">
    <molecule>Non-structural protein 4B</molecule>
    <text evidence="6">Interacts with serine protease NS3 (By similarity).</text>
</comment>
<comment type="subunit">
    <molecule>RNA-directed RNA polymerase NS5</molecule>
    <text evidence="6">Homodimer. Interacts with host STAT2; this interaction inhibits the phosphorylation of the latter, and, when all viral proteins are present (polyprotein), targets STAT2 for degradation. Interacts with serine protease NS3.</text>
</comment>
<comment type="subcellular location">
    <molecule>Genome polyprotein</molecule>
    <subcellularLocation>
        <location evidence="12">Host endoplasmic reticulum membrane</location>
        <topology evidence="12">Multi-pass membrane protein</topology>
    </subcellularLocation>
</comment>
<comment type="subcellular location">
    <molecule>Capsid protein C</molecule>
    <subcellularLocation>
        <location evidence="6">Virion</location>
    </subcellularLocation>
    <subcellularLocation>
        <location evidence="6">Host nucleus</location>
    </subcellularLocation>
    <subcellularLocation>
        <location evidence="2">Host cytoplasm</location>
    </subcellularLocation>
    <subcellularLocation>
        <location evidence="2">Host cytoplasm</location>
        <location evidence="2">Host perinuclear region</location>
    </subcellularLocation>
</comment>
<comment type="subcellular location">
    <molecule>Peptide pr</molecule>
    <subcellularLocation>
        <location evidence="6">Secreted</location>
    </subcellularLocation>
</comment>
<comment type="subcellular location">
    <molecule>Small envelope protein M</molecule>
    <subcellularLocation>
        <location evidence="1">Virion membrane</location>
        <topology evidence="1">Multi-pass membrane protein</topology>
    </subcellularLocation>
    <subcellularLocation>
        <location evidence="1">Host endoplasmic reticulum membrane</location>
        <topology evidence="12">Multi-pass membrane protein</topology>
    </subcellularLocation>
    <text evidence="1">ER membrane retention is mediated by the transmembrane domains.</text>
</comment>
<comment type="subcellular location">
    <molecule>Envelope protein E</molecule>
    <subcellularLocation>
        <location evidence="20">Virion membrane</location>
        <topology evidence="1">Multi-pass membrane protein</topology>
    </subcellularLocation>
    <subcellularLocation>
        <location evidence="1">Host endoplasmic reticulum membrane</location>
        <topology evidence="12">Multi-pass membrane protein</topology>
    </subcellularLocation>
    <subcellularLocation>
        <location evidence="1">Host cell surface</location>
    </subcellularLocation>
    <text evidence="1">ER membrane retention is mediated by the transmembrane domains.</text>
</comment>
<comment type="subcellular location">
    <molecule>Non-structural protein 1</molecule>
    <subcellularLocation>
        <location evidence="6">Secreted</location>
    </subcellularLocation>
    <subcellularLocation>
        <location>Host endoplasmic reticulum membrane</location>
        <topology>Peripheral membrane protein</topology>
        <orientation evidence="6">Lumenal side</orientation>
    </subcellularLocation>
    <text evidence="11">Located in RE-derived vesicles hosting the replication complex.</text>
</comment>
<comment type="subcellular location">
    <molecule>Non-structural protein 2A</molecule>
    <subcellularLocation>
        <location evidence="3">Host endoplasmic reticulum membrane</location>
        <topology evidence="6">Multi-pass membrane protein</topology>
    </subcellularLocation>
</comment>
<comment type="subcellular location">
    <molecule>Serine protease subunit NS2B</molecule>
    <subcellularLocation>
        <location>Host endoplasmic reticulum membrane</location>
        <topology evidence="6">Multi-pass membrane protein</topology>
    </subcellularLocation>
</comment>
<comment type="subcellular location">
    <molecule>Serine protease NS3</molecule>
    <subcellularLocation>
        <location evidence="17">Host endoplasmic reticulum membrane</location>
        <topology evidence="17">Peripheral membrane protein</topology>
        <orientation evidence="17">Cytoplasmic side</orientation>
    </subcellularLocation>
    <text evidence="17">Remains non-covalently associated to serine protease subunit NS2B.</text>
</comment>
<comment type="subcellular location">
    <molecule>Non-structural protein 4A</molecule>
    <subcellularLocation>
        <location evidence="3">Host endoplasmic reticulum membrane</location>
        <topology evidence="6">Multi-pass membrane protein</topology>
    </subcellularLocation>
    <text evidence="6">Located in RE-associated vesicles hosting the replication complex.</text>
</comment>
<comment type="subcellular location">
    <molecule>Non-structural protein 4B</molecule>
    <subcellularLocation>
        <location evidence="6">Host endoplasmic reticulum membrane</location>
        <topology evidence="6">Multi-pass membrane protein</topology>
    </subcellularLocation>
    <text evidence="11">Located in RE-derived vesicles hosting the replication complex.</text>
</comment>
<comment type="subcellular location">
    <molecule>RNA-directed RNA polymerase NS5</molecule>
    <subcellularLocation>
        <location>Host endoplasmic reticulum membrane</location>
        <topology>Peripheral membrane protein</topology>
        <orientation evidence="6">Cytoplasmic side</orientation>
    </subcellularLocation>
    <subcellularLocation>
        <location evidence="7">Host nucleus</location>
    </subcellularLocation>
    <text evidence="6">Located in RE-associated vesicles hosting the replication complex. NS5 protein is mainly localized in the nucleus rather than in ER vesicles.</text>
</comment>
<comment type="alternative products">
    <event type="ribosomal frameshifting"/>
    <isoform>
        <id>G3FEX6-1</id>
        <name>Genome polyprotein</name>
        <sequence type="displayed"/>
    </isoform>
    <isoform>
        <id>P0DOK8-1</id>
        <name>Structural polyprotein</name>
        <sequence type="external"/>
    </isoform>
</comment>
<comment type="domain">
    <text evidence="6">The transmembrane domains of the small envelope protein M and envelope protein E contain an endoplasmic reticulum retention signal.</text>
</comment>
<comment type="PTM">
    <molecule>Genome polyprotein</molecule>
    <text evidence="6 7">Specific enzymatic cleavages in vivo yield mature proteins (By similarity). Cleavages in the lumen of endoplasmic reticulum are performed by host signal peptidase, whereas cleavages in the cytoplasmic side are performed by serine protease NS3. Signal cleavage at the 2K-4B site requires a prior NS3 protease-mediated cleavage at the 4A-2K site.</text>
</comment>
<comment type="PTM">
    <molecule>Protein prM</molecule>
    <text evidence="6">Cleaved in post-Golgi vesicles by a host furin, releasing the mature small envelope protein M, and peptide pr. This cleavage is incomplete as up to 30% of viral particles still carry uncleaved prM.</text>
</comment>
<comment type="PTM">
    <molecule>Envelope protein E</molecule>
    <text evidence="6">N-glycosylated.</text>
</comment>
<comment type="PTM">
    <molecule>Non-structural protein 1</molecule>
    <text evidence="6">N-glycosylated. The excreted form is glycosylated and this is required for efficient secretion of the protein from infected cells.</text>
</comment>
<comment type="PTM">
    <molecule>Serine protease NS3</molecule>
    <text evidence="9">Acetylated by host KAT5. Acetylation modulates NS3 RNA-binding and unwinding activities and plays an important positive role for viral replication.</text>
</comment>
<comment type="PTM">
    <molecule>RNA-directed RNA polymerase NS5</molecule>
    <text evidence="6">Phosphorylated on serines residues. This phosphorylation may trigger NS5 nuclear localization.</text>
</comment>
<comment type="miscellaneous">
    <text evidence="20">Strain M28 is classified as genotype I.</text>
</comment>
<comment type="similarity">
    <text evidence="18">In the N-terminal section; belongs to the class I-like SAM-binding methyltransferase superfamily. mRNA cap 0-1 NS5-type methyltransferase family.</text>
</comment>
<proteinExistence type="inferred from homology"/>
<accession>G3FEX6</accession>
<accession>A0A165GB83</accession>
<protein>
    <recommendedName>
        <fullName>Genome polyprotein</fullName>
    </recommendedName>
    <component>
        <recommendedName>
            <fullName>Capsid protein C</fullName>
        </recommendedName>
        <alternativeName>
            <fullName>Core protein</fullName>
        </alternativeName>
    </component>
    <component>
        <recommendedName>
            <fullName>Protein prM</fullName>
        </recommendedName>
    </component>
    <component>
        <recommendedName>
            <fullName>Peptide pr</fullName>
        </recommendedName>
    </component>
    <component>
        <recommendedName>
            <fullName>Small envelope protein M</fullName>
        </recommendedName>
        <alternativeName>
            <fullName>Matrix protein</fullName>
        </alternativeName>
    </component>
    <component>
        <recommendedName>
            <fullName>Envelope protein E</fullName>
        </recommendedName>
    </component>
    <component>
        <recommendedName>
            <fullName>Non-structural protein 1</fullName>
            <shortName>NS1</shortName>
        </recommendedName>
    </component>
    <component>
        <recommendedName>
            <fullName>Non-structural protein 2A</fullName>
            <shortName>NS2A</shortName>
        </recommendedName>
    </component>
    <component>
        <recommendedName>
            <fullName>Serine protease subunit NS2B</fullName>
        </recommendedName>
        <alternativeName>
            <fullName>Flavivirin protease NS2B regulatory subunit</fullName>
        </alternativeName>
        <alternativeName>
            <fullName>Non-structural protein 2B</fullName>
        </alternativeName>
    </component>
    <component>
        <recommendedName>
            <fullName>Serine protease NS3</fullName>
            <ecNumber evidence="7">3.4.21.91</ecNumber>
            <ecNumber evidence="7">3.6.1.15</ecNumber>
            <ecNumber evidence="7">3.6.4.13</ecNumber>
        </recommendedName>
        <alternativeName>
            <fullName>Flavivirin protease NS3 catalytic subunit</fullName>
        </alternativeName>
        <alternativeName>
            <fullName>Non-structural protein 3</fullName>
        </alternativeName>
    </component>
    <component>
        <recommendedName>
            <fullName>Non-structural protein 4A</fullName>
            <shortName>NS4A</shortName>
        </recommendedName>
    </component>
    <component>
        <recommendedName>
            <fullName>Peptide 2k</fullName>
        </recommendedName>
    </component>
    <component>
        <recommendedName>
            <fullName>Non-structural protein 4B</fullName>
            <shortName>NS4B</shortName>
        </recommendedName>
    </component>
    <component>
        <recommendedName>
            <fullName>RNA-directed RNA polymerase NS5</fullName>
            <ecNumber evidence="18">2.1.1.56</ecNumber>
            <ecNumber evidence="18">2.1.1.57</ecNumber>
            <ecNumber evidence="13">2.7.7.48</ecNumber>
        </recommendedName>
        <alternativeName>
            <fullName>Non-structural protein 5</fullName>
        </alternativeName>
    </component>
</protein>
<dbReference type="EC" id="3.4.21.91" evidence="7"/>
<dbReference type="EC" id="3.6.1.15" evidence="7"/>
<dbReference type="EC" id="3.6.4.13" evidence="7"/>
<dbReference type="EC" id="2.1.1.56" evidence="18"/>
<dbReference type="EC" id="2.1.1.57" evidence="18"/>
<dbReference type="EC" id="2.7.7.48" evidence="13"/>
<dbReference type="EMBL" id="JF706279">
    <property type="protein sequence ID" value="AEO86788.1"/>
    <property type="molecule type" value="Genomic_RNA"/>
</dbReference>
<dbReference type="EMBL" id="KT957422">
    <property type="protein sequence ID" value="AMY26915.1"/>
    <property type="molecule type" value="Genomic_RNA"/>
</dbReference>
<dbReference type="SMR" id="G3FEX6"/>
<dbReference type="Proteomes" id="UP000140283">
    <property type="component" value="Genome"/>
</dbReference>
<dbReference type="Proteomes" id="UP000180570">
    <property type="component" value="Genome"/>
</dbReference>
<dbReference type="GO" id="GO:0005576">
    <property type="term" value="C:extracellular region"/>
    <property type="evidence" value="ECO:0007669"/>
    <property type="project" value="UniProtKB-SubCell"/>
</dbReference>
<dbReference type="GO" id="GO:0044167">
    <property type="term" value="C:host cell endoplasmic reticulum membrane"/>
    <property type="evidence" value="ECO:0007669"/>
    <property type="project" value="UniProtKB-SubCell"/>
</dbReference>
<dbReference type="GO" id="GO:0042025">
    <property type="term" value="C:host cell nucleus"/>
    <property type="evidence" value="ECO:0007669"/>
    <property type="project" value="UniProtKB-SubCell"/>
</dbReference>
<dbReference type="GO" id="GO:0044220">
    <property type="term" value="C:host cell perinuclear region of cytoplasm"/>
    <property type="evidence" value="ECO:0007669"/>
    <property type="project" value="UniProtKB-SubCell"/>
</dbReference>
<dbReference type="GO" id="GO:0044228">
    <property type="term" value="C:host cell surface"/>
    <property type="evidence" value="ECO:0007669"/>
    <property type="project" value="UniProtKB-SubCell"/>
</dbReference>
<dbReference type="GO" id="GO:0016020">
    <property type="term" value="C:membrane"/>
    <property type="evidence" value="ECO:0007669"/>
    <property type="project" value="UniProtKB-KW"/>
</dbReference>
<dbReference type="GO" id="GO:0019028">
    <property type="term" value="C:viral capsid"/>
    <property type="evidence" value="ECO:0007669"/>
    <property type="project" value="UniProtKB-KW"/>
</dbReference>
<dbReference type="GO" id="GO:0019031">
    <property type="term" value="C:viral envelope"/>
    <property type="evidence" value="ECO:0007669"/>
    <property type="project" value="UniProtKB-KW"/>
</dbReference>
<dbReference type="GO" id="GO:0055036">
    <property type="term" value="C:virion membrane"/>
    <property type="evidence" value="ECO:0007669"/>
    <property type="project" value="UniProtKB-SubCell"/>
</dbReference>
<dbReference type="GO" id="GO:0005524">
    <property type="term" value="F:ATP binding"/>
    <property type="evidence" value="ECO:0007669"/>
    <property type="project" value="UniProtKB-KW"/>
</dbReference>
<dbReference type="GO" id="GO:0016887">
    <property type="term" value="F:ATP hydrolysis activity"/>
    <property type="evidence" value="ECO:0007669"/>
    <property type="project" value="RHEA"/>
</dbReference>
<dbReference type="GO" id="GO:0003725">
    <property type="term" value="F:double-stranded RNA binding"/>
    <property type="evidence" value="ECO:0007669"/>
    <property type="project" value="InterPro"/>
</dbReference>
<dbReference type="GO" id="GO:0046872">
    <property type="term" value="F:metal ion binding"/>
    <property type="evidence" value="ECO:0007669"/>
    <property type="project" value="UniProtKB-KW"/>
</dbReference>
<dbReference type="GO" id="GO:0004483">
    <property type="term" value="F:mRNA (nucleoside-2'-O-)-methyltransferase activity"/>
    <property type="evidence" value="ECO:0007669"/>
    <property type="project" value="UniProtKB-EC"/>
</dbReference>
<dbReference type="GO" id="GO:0004482">
    <property type="term" value="F:mRNA 5'-cap (guanine-N7-)-methyltransferase activity"/>
    <property type="evidence" value="ECO:0007669"/>
    <property type="project" value="UniProtKB-EC"/>
</dbReference>
<dbReference type="GO" id="GO:0046983">
    <property type="term" value="F:protein dimerization activity"/>
    <property type="evidence" value="ECO:0007669"/>
    <property type="project" value="InterPro"/>
</dbReference>
<dbReference type="GO" id="GO:0003724">
    <property type="term" value="F:RNA helicase activity"/>
    <property type="evidence" value="ECO:0007669"/>
    <property type="project" value="UniProtKB-EC"/>
</dbReference>
<dbReference type="GO" id="GO:0003968">
    <property type="term" value="F:RNA-directed RNA polymerase activity"/>
    <property type="evidence" value="ECO:0007669"/>
    <property type="project" value="UniProtKB-KW"/>
</dbReference>
<dbReference type="GO" id="GO:0004252">
    <property type="term" value="F:serine-type endopeptidase activity"/>
    <property type="evidence" value="ECO:0007669"/>
    <property type="project" value="InterPro"/>
</dbReference>
<dbReference type="GO" id="GO:0005198">
    <property type="term" value="F:structural molecule activity"/>
    <property type="evidence" value="ECO:0007669"/>
    <property type="project" value="InterPro"/>
</dbReference>
<dbReference type="GO" id="GO:0075512">
    <property type="term" value="P:clathrin-dependent endocytosis of virus by host cell"/>
    <property type="evidence" value="ECO:0007669"/>
    <property type="project" value="UniProtKB-KW"/>
</dbReference>
<dbReference type="GO" id="GO:0039654">
    <property type="term" value="P:fusion of virus membrane with host endosome membrane"/>
    <property type="evidence" value="ECO:0007669"/>
    <property type="project" value="UniProtKB-KW"/>
</dbReference>
<dbReference type="GO" id="GO:0006508">
    <property type="term" value="P:proteolysis"/>
    <property type="evidence" value="ECO:0007669"/>
    <property type="project" value="UniProtKB-KW"/>
</dbReference>
<dbReference type="GO" id="GO:0039520">
    <property type="term" value="P:symbiont-mediated activation of host autophagy"/>
    <property type="evidence" value="ECO:0007669"/>
    <property type="project" value="UniProtKB-KW"/>
</dbReference>
<dbReference type="GO" id="GO:0039574">
    <property type="term" value="P:symbiont-mediated suppression of host JAK-STAT cascade via inhibition of host TYK2 activity"/>
    <property type="evidence" value="ECO:0007669"/>
    <property type="project" value="UniProtKB-KW"/>
</dbReference>
<dbReference type="GO" id="GO:0039563">
    <property type="term" value="P:symbiont-mediated suppression of host JAK-STAT cascade via inhibition of STAT1 activity"/>
    <property type="evidence" value="ECO:0007669"/>
    <property type="project" value="UniProtKB-KW"/>
</dbReference>
<dbReference type="GO" id="GO:0039564">
    <property type="term" value="P:symbiont-mediated suppression of host JAK-STAT cascade via inhibition of STAT2 activity"/>
    <property type="evidence" value="ECO:0007669"/>
    <property type="project" value="UniProtKB-KW"/>
</dbReference>
<dbReference type="GO" id="GO:0039502">
    <property type="term" value="P:symbiont-mediated suppression of host type I interferon-mediated signaling pathway"/>
    <property type="evidence" value="ECO:0007669"/>
    <property type="project" value="UniProtKB-KW"/>
</dbReference>
<dbReference type="GO" id="GO:0039694">
    <property type="term" value="P:viral RNA genome replication"/>
    <property type="evidence" value="ECO:0007669"/>
    <property type="project" value="InterPro"/>
</dbReference>
<dbReference type="GO" id="GO:0075523">
    <property type="term" value="P:viral translational frameshifting"/>
    <property type="evidence" value="ECO:0007669"/>
    <property type="project" value="UniProtKB-KW"/>
</dbReference>
<dbReference type="GO" id="GO:0019062">
    <property type="term" value="P:virion attachment to host cell"/>
    <property type="evidence" value="ECO:0007669"/>
    <property type="project" value="UniProtKB-KW"/>
</dbReference>
<dbReference type="CDD" id="cd20761">
    <property type="entry name" value="capping_2-OMTase_Flaviviridae"/>
    <property type="match status" value="1"/>
</dbReference>
<dbReference type="CDD" id="cd17931">
    <property type="entry name" value="DEXHc_viral_Ns3"/>
    <property type="match status" value="1"/>
</dbReference>
<dbReference type="CDD" id="cd12149">
    <property type="entry name" value="Flavi_E_C"/>
    <property type="match status" value="1"/>
</dbReference>
<dbReference type="CDD" id="cd17038">
    <property type="entry name" value="Flavi_M"/>
    <property type="match status" value="1"/>
</dbReference>
<dbReference type="CDD" id="cd23204">
    <property type="entry name" value="Flavivirus_RdRp"/>
    <property type="match status" value="1"/>
</dbReference>
<dbReference type="CDD" id="cd18806">
    <property type="entry name" value="SF2_C_viral"/>
    <property type="match status" value="1"/>
</dbReference>
<dbReference type="FunFam" id="1.20.1280.260:FF:000001">
    <property type="entry name" value="Envelope glycoprotein"/>
    <property type="match status" value="1"/>
</dbReference>
<dbReference type="FunFam" id="2.60.40.350:FF:000001">
    <property type="entry name" value="Envelope glycoprotein"/>
    <property type="match status" value="1"/>
</dbReference>
<dbReference type="FunFam" id="1.10.260.90:FF:000001">
    <property type="entry name" value="Genome polyprotein"/>
    <property type="match status" value="1"/>
</dbReference>
<dbReference type="FunFam" id="2.60.260.50:FF:000001">
    <property type="entry name" value="Genome polyprotein"/>
    <property type="match status" value="1"/>
</dbReference>
<dbReference type="FunFam" id="3.30.70.2840:FF:000001">
    <property type="entry name" value="Genome polyprotein"/>
    <property type="match status" value="1"/>
</dbReference>
<dbReference type="FunFam" id="3.30.70.2840:FF:000002">
    <property type="entry name" value="Genome polyprotein"/>
    <property type="match status" value="1"/>
</dbReference>
<dbReference type="FunFam" id="3.40.50.150:FF:000105">
    <property type="entry name" value="Genome polyprotein"/>
    <property type="match status" value="1"/>
</dbReference>
<dbReference type="FunFam" id="3.40.50.300:FF:000763">
    <property type="entry name" value="Genome polyprotein"/>
    <property type="match status" value="1"/>
</dbReference>
<dbReference type="Gene3D" id="1.10.10.930">
    <property type="match status" value="1"/>
</dbReference>
<dbReference type="Gene3D" id="1.10.260.90">
    <property type="match status" value="1"/>
</dbReference>
<dbReference type="Gene3D" id="1.20.1280.260">
    <property type="match status" value="1"/>
</dbReference>
<dbReference type="Gene3D" id="2.40.10.120">
    <property type="match status" value="2"/>
</dbReference>
<dbReference type="Gene3D" id="2.60.40.350">
    <property type="match status" value="1"/>
</dbReference>
<dbReference type="Gene3D" id="1.10.8.970">
    <property type="entry name" value="Flavivirus envelope glycoprotein M-like"/>
    <property type="match status" value="1"/>
</dbReference>
<dbReference type="Gene3D" id="2.60.260.50">
    <property type="entry name" value="Flavivirus polyprotein propeptide domain"/>
    <property type="match status" value="1"/>
</dbReference>
<dbReference type="Gene3D" id="3.30.70.2840">
    <property type="entry name" value="Flavivirus RNA-directed RNA polymerase, thumb domain"/>
    <property type="match status" value="3"/>
</dbReference>
<dbReference type="Gene3D" id="3.40.50.300">
    <property type="entry name" value="P-loop containing nucleotide triphosphate hydrolases"/>
    <property type="match status" value="2"/>
</dbReference>
<dbReference type="Gene3D" id="2.60.98.10">
    <property type="entry name" value="Tick-borne Encephalitis virus Glycoprotein, domain 1"/>
    <property type="match status" value="1"/>
</dbReference>
<dbReference type="Gene3D" id="3.40.50.150">
    <property type="entry name" value="Vaccinia Virus protein VP39"/>
    <property type="match status" value="1"/>
</dbReference>
<dbReference type="Gene3D" id="3.30.67.10">
    <property type="entry name" value="Viral Envelope Glycoprotein, domain 2"/>
    <property type="match status" value="1"/>
</dbReference>
<dbReference type="Gene3D" id="3.30.387.10">
    <property type="entry name" value="Viral Envelope Glycoprotein, domain 3"/>
    <property type="match status" value="1"/>
</dbReference>
<dbReference type="InterPro" id="IPR043502">
    <property type="entry name" value="DNA/RNA_pol_sf"/>
</dbReference>
<dbReference type="InterPro" id="IPR000069">
    <property type="entry name" value="Env_glycoprot_M_flavivir"/>
</dbReference>
<dbReference type="InterPro" id="IPR038302">
    <property type="entry name" value="Env_glycoprot_M_sf_flavivir"/>
</dbReference>
<dbReference type="InterPro" id="IPR013755">
    <property type="entry name" value="Flav_gly_cen_dom_subdom1"/>
</dbReference>
<dbReference type="InterPro" id="IPR001122">
    <property type="entry name" value="Flavi_capsidC"/>
</dbReference>
<dbReference type="InterPro" id="IPR037172">
    <property type="entry name" value="Flavi_capsidC_sf"/>
</dbReference>
<dbReference type="InterPro" id="IPR011492">
    <property type="entry name" value="Flavi_DEAD"/>
</dbReference>
<dbReference type="InterPro" id="IPR027287">
    <property type="entry name" value="Flavi_E_Ig-like"/>
</dbReference>
<dbReference type="InterPro" id="IPR026470">
    <property type="entry name" value="Flavi_E_Stem/Anchor_dom"/>
</dbReference>
<dbReference type="InterPro" id="IPR038345">
    <property type="entry name" value="Flavi_E_Stem/Anchor_dom_sf"/>
</dbReference>
<dbReference type="InterPro" id="IPR011998">
    <property type="entry name" value="Flavi_Glycoprot_E_cen/dimer"/>
</dbReference>
<dbReference type="InterPro" id="IPR001157">
    <property type="entry name" value="Flavi_NS1"/>
</dbReference>
<dbReference type="InterPro" id="IPR000752">
    <property type="entry name" value="Flavi_NS2A"/>
</dbReference>
<dbReference type="InterPro" id="IPR000487">
    <property type="entry name" value="Flavi_NS2B"/>
</dbReference>
<dbReference type="InterPro" id="IPR001850">
    <property type="entry name" value="Flavi_NS3_S7"/>
</dbReference>
<dbReference type="InterPro" id="IPR000404">
    <property type="entry name" value="Flavi_NS4A"/>
</dbReference>
<dbReference type="InterPro" id="IPR001528">
    <property type="entry name" value="Flavi_NS4B"/>
</dbReference>
<dbReference type="InterPro" id="IPR046811">
    <property type="entry name" value="Flavi_NS5_thumb"/>
</dbReference>
<dbReference type="InterPro" id="IPR002535">
    <property type="entry name" value="Flavi_propep"/>
</dbReference>
<dbReference type="InterPro" id="IPR038688">
    <property type="entry name" value="Flavi_propep_sf"/>
</dbReference>
<dbReference type="InterPro" id="IPR047530">
    <property type="entry name" value="Flavi_RdRp"/>
</dbReference>
<dbReference type="InterPro" id="IPR000208">
    <property type="entry name" value="Flavi_RdRp_fingers/palm"/>
</dbReference>
<dbReference type="InterPro" id="IPR000336">
    <property type="entry name" value="Flavivir/Alphavir_Ig-like_sf"/>
</dbReference>
<dbReference type="InterPro" id="IPR014412">
    <property type="entry name" value="Gen_Poly_FLV"/>
</dbReference>
<dbReference type="InterPro" id="IPR036253">
    <property type="entry name" value="Glycoprot_cen/dimer_sf"/>
</dbReference>
<dbReference type="InterPro" id="IPR038055">
    <property type="entry name" value="Glycoprot_E_dimer_dom"/>
</dbReference>
<dbReference type="InterPro" id="IPR013756">
    <property type="entry name" value="GlyE_cen_dom_subdom2"/>
</dbReference>
<dbReference type="InterPro" id="IPR014001">
    <property type="entry name" value="Helicase_ATP-bd"/>
</dbReference>
<dbReference type="InterPro" id="IPR001650">
    <property type="entry name" value="Helicase_C-like"/>
</dbReference>
<dbReference type="InterPro" id="IPR014756">
    <property type="entry name" value="Ig_E-set"/>
</dbReference>
<dbReference type="InterPro" id="IPR026490">
    <property type="entry name" value="mRNA_cap_0/1_MeTrfase"/>
</dbReference>
<dbReference type="InterPro" id="IPR049486">
    <property type="entry name" value="NS3-hel_C_flaviviridae"/>
</dbReference>
<dbReference type="InterPro" id="IPR027417">
    <property type="entry name" value="P-loop_NTPase"/>
</dbReference>
<dbReference type="InterPro" id="IPR009003">
    <property type="entry name" value="Peptidase_S1_PA"/>
</dbReference>
<dbReference type="InterPro" id="IPR007094">
    <property type="entry name" value="RNA-dir_pol_PSvirus"/>
</dbReference>
<dbReference type="InterPro" id="IPR002877">
    <property type="entry name" value="RNA_MeTrfase_FtsJ_dom"/>
</dbReference>
<dbReference type="InterPro" id="IPR029063">
    <property type="entry name" value="SAM-dependent_MTases_sf"/>
</dbReference>
<dbReference type="NCBIfam" id="TIGR04240">
    <property type="entry name" value="flavi_E_stem"/>
    <property type="match status" value="1"/>
</dbReference>
<dbReference type="Pfam" id="PF20907">
    <property type="entry name" value="Flav_NS3-hel_C"/>
    <property type="match status" value="1"/>
</dbReference>
<dbReference type="Pfam" id="PF01003">
    <property type="entry name" value="Flavi_capsid"/>
    <property type="match status" value="1"/>
</dbReference>
<dbReference type="Pfam" id="PF07652">
    <property type="entry name" value="Flavi_DEAD"/>
    <property type="match status" value="1"/>
</dbReference>
<dbReference type="Pfam" id="PF21659">
    <property type="entry name" value="Flavi_E_stem"/>
    <property type="match status" value="1"/>
</dbReference>
<dbReference type="Pfam" id="PF02832">
    <property type="entry name" value="Flavi_glycop_C"/>
    <property type="match status" value="1"/>
</dbReference>
<dbReference type="Pfam" id="PF00869">
    <property type="entry name" value="Flavi_glycoprot"/>
    <property type="match status" value="1"/>
</dbReference>
<dbReference type="Pfam" id="PF01004">
    <property type="entry name" value="Flavi_M"/>
    <property type="match status" value="1"/>
</dbReference>
<dbReference type="Pfam" id="PF00948">
    <property type="entry name" value="Flavi_NS1"/>
    <property type="match status" value="1"/>
</dbReference>
<dbReference type="Pfam" id="PF01005">
    <property type="entry name" value="Flavi_NS2A"/>
    <property type="match status" value="1"/>
</dbReference>
<dbReference type="Pfam" id="PF01002">
    <property type="entry name" value="Flavi_NS2B"/>
    <property type="match status" value="1"/>
</dbReference>
<dbReference type="Pfam" id="PF01350">
    <property type="entry name" value="Flavi_NS4A"/>
    <property type="match status" value="1"/>
</dbReference>
<dbReference type="Pfam" id="PF01349">
    <property type="entry name" value="Flavi_NS4B"/>
    <property type="match status" value="1"/>
</dbReference>
<dbReference type="Pfam" id="PF00972">
    <property type="entry name" value="Flavi_NS5"/>
    <property type="match status" value="1"/>
</dbReference>
<dbReference type="Pfam" id="PF20483">
    <property type="entry name" value="Flavi_NS5_thumb"/>
    <property type="match status" value="1"/>
</dbReference>
<dbReference type="Pfam" id="PF01570">
    <property type="entry name" value="Flavi_propep"/>
    <property type="match status" value="1"/>
</dbReference>
<dbReference type="Pfam" id="PF01728">
    <property type="entry name" value="FtsJ"/>
    <property type="match status" value="1"/>
</dbReference>
<dbReference type="Pfam" id="PF00949">
    <property type="entry name" value="Peptidase_S7"/>
    <property type="match status" value="1"/>
</dbReference>
<dbReference type="PIRSF" id="PIRSF003817">
    <property type="entry name" value="Gen_Poly_FLV"/>
    <property type="match status" value="1"/>
</dbReference>
<dbReference type="SMART" id="SM00487">
    <property type="entry name" value="DEXDc"/>
    <property type="match status" value="1"/>
</dbReference>
<dbReference type="SMART" id="SM00490">
    <property type="entry name" value="HELICc"/>
    <property type="match status" value="1"/>
</dbReference>
<dbReference type="SUPFAM" id="SSF56672">
    <property type="entry name" value="DNA/RNA polymerases"/>
    <property type="match status" value="1"/>
</dbReference>
<dbReference type="SUPFAM" id="SSF81296">
    <property type="entry name" value="E set domains"/>
    <property type="match status" value="1"/>
</dbReference>
<dbReference type="SUPFAM" id="SSF101257">
    <property type="entry name" value="Flavivirus capsid protein C"/>
    <property type="match status" value="1"/>
</dbReference>
<dbReference type="SUPFAM" id="SSF52540">
    <property type="entry name" value="P-loop containing nucleoside triphosphate hydrolases"/>
    <property type="match status" value="2"/>
</dbReference>
<dbReference type="SUPFAM" id="SSF53335">
    <property type="entry name" value="S-adenosyl-L-methionine-dependent methyltransferases"/>
    <property type="match status" value="1"/>
</dbReference>
<dbReference type="SUPFAM" id="SSF50494">
    <property type="entry name" value="Trypsin-like serine proteases"/>
    <property type="match status" value="1"/>
</dbReference>
<dbReference type="SUPFAM" id="SSF56983">
    <property type="entry name" value="Viral glycoprotein, central and dimerisation domains"/>
    <property type="match status" value="1"/>
</dbReference>
<dbReference type="PROSITE" id="PS51527">
    <property type="entry name" value="FLAVIVIRUS_NS2B"/>
    <property type="match status" value="1"/>
</dbReference>
<dbReference type="PROSITE" id="PS51528">
    <property type="entry name" value="FLAVIVIRUS_NS3PRO"/>
    <property type="match status" value="1"/>
</dbReference>
<dbReference type="PROSITE" id="PS51192">
    <property type="entry name" value="HELICASE_ATP_BIND_1"/>
    <property type="match status" value="1"/>
</dbReference>
<dbReference type="PROSITE" id="PS51194">
    <property type="entry name" value="HELICASE_CTER"/>
    <property type="match status" value="1"/>
</dbReference>
<dbReference type="PROSITE" id="PS50507">
    <property type="entry name" value="RDRP_SSRNA_POS"/>
    <property type="match status" value="1"/>
</dbReference>
<dbReference type="PROSITE" id="PS51591">
    <property type="entry name" value="RNA_CAP01_NS5_MT"/>
    <property type="match status" value="1"/>
</dbReference>